<evidence type="ECO:0000250" key="1">
    <source>
        <dbReference type="UniProtKB" id="P02452"/>
    </source>
</evidence>
<evidence type="ECO:0000250" key="2">
    <source>
        <dbReference type="UniProtKB" id="P02454"/>
    </source>
</evidence>
<evidence type="ECO:0000250" key="3">
    <source>
        <dbReference type="UniProtKB" id="P02457"/>
    </source>
</evidence>
<evidence type="ECO:0000250" key="4">
    <source>
        <dbReference type="UniProtKB" id="P11087"/>
    </source>
</evidence>
<evidence type="ECO:0000256" key="5">
    <source>
        <dbReference type="SAM" id="MobiDB-lite"/>
    </source>
</evidence>
<evidence type="ECO:0000269" key="6">
    <source>
    </source>
</evidence>
<evidence type="ECO:0000303" key="7">
    <source>
    </source>
</evidence>
<evidence type="ECO:0000305" key="8"/>
<feature type="chain" id="PRO_0000448452" description="Collagen alpha-1(I) chain">
    <location>
        <begin position="1"/>
        <end position="976"/>
    </location>
</feature>
<feature type="region of interest" description="Disordered" evidence="5">
    <location>
        <begin position="1"/>
        <end position="976"/>
    </location>
</feature>
<feature type="compositionally biased region" description="Basic and acidic residues" evidence="5">
    <location>
        <begin position="58"/>
        <end position="72"/>
    </location>
</feature>
<feature type="compositionally biased region" description="Low complexity" evidence="5">
    <location>
        <begin position="108"/>
        <end position="118"/>
    </location>
</feature>
<feature type="compositionally biased region" description="Low complexity" evidence="5">
    <location>
        <begin position="132"/>
        <end position="150"/>
    </location>
</feature>
<feature type="compositionally biased region" description="Pro residues" evidence="5">
    <location>
        <begin position="152"/>
        <end position="164"/>
    </location>
</feature>
<feature type="compositionally biased region" description="Low complexity" evidence="5">
    <location>
        <begin position="198"/>
        <end position="237"/>
    </location>
</feature>
<feature type="compositionally biased region" description="Gly residues" evidence="5">
    <location>
        <begin position="294"/>
        <end position="308"/>
    </location>
</feature>
<feature type="compositionally biased region" description="Low complexity" evidence="5">
    <location>
        <begin position="352"/>
        <end position="378"/>
    </location>
</feature>
<feature type="compositionally biased region" description="Low complexity" evidence="5">
    <location>
        <begin position="387"/>
        <end position="406"/>
    </location>
</feature>
<feature type="compositionally biased region" description="Low complexity" evidence="5">
    <location>
        <begin position="465"/>
        <end position="474"/>
    </location>
</feature>
<feature type="compositionally biased region" description="Low complexity" evidence="5">
    <location>
        <begin position="577"/>
        <end position="591"/>
    </location>
</feature>
<feature type="compositionally biased region" description="Low complexity" evidence="5">
    <location>
        <begin position="604"/>
        <end position="631"/>
    </location>
</feature>
<feature type="compositionally biased region" description="Low complexity" evidence="5">
    <location>
        <begin position="660"/>
        <end position="676"/>
    </location>
</feature>
<feature type="compositionally biased region" description="Low complexity" evidence="5">
    <location>
        <begin position="723"/>
        <end position="735"/>
    </location>
</feature>
<feature type="compositionally biased region" description="Pro residues" evidence="5">
    <location>
        <begin position="785"/>
        <end position="795"/>
    </location>
</feature>
<feature type="compositionally biased region" description="Pro residues" evidence="5">
    <location>
        <begin position="829"/>
        <end position="844"/>
    </location>
</feature>
<feature type="compositionally biased region" description="Low complexity" evidence="5">
    <location>
        <begin position="864"/>
        <end position="878"/>
    </location>
</feature>
<feature type="compositionally biased region" description="Basic and acidic residues" evidence="5">
    <location>
        <begin position="879"/>
        <end position="893"/>
    </location>
</feature>
<feature type="compositionally biased region" description="Low complexity" evidence="5">
    <location>
        <begin position="910"/>
        <end position="943"/>
    </location>
</feature>
<feature type="compositionally biased region" description="Pro residues" evidence="5">
    <location>
        <begin position="961"/>
        <end position="976"/>
    </location>
</feature>
<feature type="modified residue" description="Phosphoserine" evidence="2">
    <location>
        <position position="1"/>
    </location>
</feature>
<feature type="modified residue" description="4-hydroxyproline" evidence="3">
    <location>
        <position position="20"/>
    </location>
</feature>
<feature type="modified residue" description="4-hydroxyproline" evidence="3">
    <location>
        <position position="23"/>
    </location>
</feature>
<feature type="modified residue" description="4-hydroxyproline" evidence="3">
    <location>
        <position position="26"/>
    </location>
</feature>
<feature type="modified residue" description="4-hydroxyproline" evidence="3">
    <location>
        <position position="35"/>
    </location>
</feature>
<feature type="modified residue" description="4-hydroxyproline" evidence="3">
    <location>
        <position position="38"/>
    </location>
</feature>
<feature type="modified residue" description="4-hydroxyproline" evidence="3">
    <location>
        <position position="41"/>
    </location>
</feature>
<feature type="modified residue" description="4-hydroxyproline" evidence="3">
    <location>
        <position position="55"/>
    </location>
</feature>
<feature type="modified residue" description="4-hydroxyproline" evidence="3">
    <location>
        <position position="70"/>
    </location>
</feature>
<feature type="modified residue" description="4-hydroxyproline" evidence="3">
    <location>
        <position position="76"/>
    </location>
</feature>
<feature type="modified residue" description="4-hydroxyproline" evidence="3">
    <location>
        <position position="85"/>
    </location>
</feature>
<feature type="modified residue" description="4-hydroxyproline" evidence="3">
    <location>
        <position position="91"/>
    </location>
</feature>
<feature type="modified residue" description="5-hydroxylysine; alternate" evidence="1">
    <location>
        <position position="94"/>
    </location>
</feature>
<feature type="modified residue" description="Phosphoserine" evidence="2">
    <location>
        <position position="100"/>
    </location>
</feature>
<feature type="modified residue" description="4-hydroxyproline" evidence="3">
    <location>
        <position position="118"/>
    </location>
</feature>
<feature type="modified residue" description="4-hydroxyproline" evidence="3">
    <location>
        <position position="132"/>
    </location>
</feature>
<feature type="modified residue" description="4-hydroxyproline" evidence="3">
    <location>
        <position position="153"/>
    </location>
</feature>
<feature type="modified residue" description="4-hydroxyproline" evidence="3">
    <location>
        <position position="162"/>
    </location>
</feature>
<feature type="modified residue" description="4-hydroxyproline" evidence="3">
    <location>
        <position position="165"/>
    </location>
</feature>
<feature type="modified residue" description="4-hydroxyproline" evidence="3">
    <location>
        <position position="192"/>
    </location>
</feature>
<feature type="modified residue" description="4-hydroxyproline" evidence="3">
    <location>
        <position position="195"/>
    </location>
</feature>
<feature type="modified residue" description="4-hydroxyproline" evidence="3">
    <location>
        <position position="207"/>
    </location>
</feature>
<feature type="modified residue" description="4-hydroxyproline" evidence="3">
    <location>
        <position position="213"/>
    </location>
</feature>
<feature type="modified residue" description="4-hydroxyproline" evidence="3">
    <location>
        <position position="222"/>
    </location>
</feature>
<feature type="modified residue" description="4-hydroxyproline" evidence="3">
    <location>
        <position position="228"/>
    </location>
</feature>
<feature type="modified residue" description="4-hydroxyproline" evidence="3">
    <location>
        <position position="231"/>
    </location>
</feature>
<feature type="modified residue" description="4-hydroxyproline" evidence="3">
    <location>
        <position position="246"/>
    </location>
</feature>
<feature type="modified residue" description="5-hydroxylysine" evidence="3">
    <location>
        <position position="249"/>
    </location>
</feature>
<feature type="modified residue" description="4-hydroxyproline" evidence="3">
    <location>
        <position position="255"/>
    </location>
</feature>
<feature type="modified residue" description="4-hydroxyproline" evidence="3">
    <location>
        <position position="258"/>
    </location>
</feature>
<feature type="modified residue" description="4-hydroxyproline" evidence="3">
    <location>
        <position position="266"/>
    </location>
</feature>
<feature type="modified residue" description="4-hydroxyproline" evidence="3">
    <location>
        <position position="275"/>
    </location>
</feature>
<feature type="modified residue" description="4-hydroxyproline" evidence="3">
    <location>
        <position position="290"/>
    </location>
</feature>
<feature type="modified residue" description="4-hydroxyproline" evidence="3">
    <location>
        <position position="296"/>
    </location>
</feature>
<feature type="modified residue" description="4-hydroxyproline" evidence="3">
    <location>
        <position position="304"/>
    </location>
</feature>
<feature type="modified residue" description="4-hydroxyproline" evidence="3">
    <location>
        <position position="310"/>
    </location>
</feature>
<feature type="modified residue" description="5-hydroxylysine" evidence="3">
    <location>
        <position position="319"/>
    </location>
</feature>
<feature type="modified residue" description="4-hydroxyproline" evidence="3">
    <location>
        <position position="328"/>
    </location>
</feature>
<feature type="modified residue" description="4-hydroxyproline" evidence="3">
    <location>
        <position position="337"/>
    </location>
</feature>
<feature type="modified residue" description="4-hydroxyproline" evidence="3">
    <location>
        <position position="343"/>
    </location>
</feature>
<feature type="modified residue" description="4-hydroxyproline" evidence="3">
    <location>
        <position position="349"/>
    </location>
</feature>
<feature type="modified residue" description="4-hydroxyproline" evidence="3">
    <location>
        <position position="358"/>
    </location>
</feature>
<feature type="modified residue" description="4-hydroxyproline" evidence="3">
    <location>
        <position position="361"/>
    </location>
</feature>
<feature type="modified residue" description="4-hydroxyproline" evidence="3">
    <location>
        <position position="370"/>
    </location>
</feature>
<feature type="modified residue" description="4-hydroxyproline" evidence="3">
    <location>
        <position position="379"/>
    </location>
</feature>
<feature type="modified residue" description="4-hydroxyproline" evidence="3">
    <location>
        <position position="385"/>
    </location>
</feature>
<feature type="modified residue" description="4-hydroxyproline" evidence="3">
    <location>
        <position position="397"/>
    </location>
</feature>
<feature type="modified residue" description="4-hydroxyproline" evidence="3">
    <location>
        <position position="406"/>
    </location>
</feature>
<feature type="modified residue" description="4-hydroxyproline" evidence="3">
    <location>
        <position position="415"/>
    </location>
</feature>
<feature type="modified residue" description="4-hydroxyproline" evidence="3">
    <location>
        <position position="418"/>
    </location>
</feature>
<feature type="modified residue" description="4-hydroxyproline" evidence="3">
    <location>
        <position position="436"/>
    </location>
</feature>
<feature type="modified residue" description="4-hydroxyproline" evidence="3">
    <location>
        <position position="453"/>
    </location>
</feature>
<feature type="modified residue" description="4-hydroxyproline" evidence="3">
    <location>
        <position position="459"/>
    </location>
</feature>
<feature type="modified residue" description="4-hydroxyproline" evidence="3">
    <location>
        <position position="465"/>
    </location>
</feature>
<feature type="modified residue" description="4-hydroxyproline" evidence="3">
    <location>
        <position position="471"/>
    </location>
</feature>
<feature type="modified residue" description="4-hydroxyproline" evidence="3">
    <location>
        <position position="477"/>
    </location>
</feature>
<feature type="modified residue" description="4-hydroxyproline" evidence="3">
    <location>
        <position position="483"/>
    </location>
</feature>
<feature type="modified residue" description="4-hydroxyproline" evidence="3">
    <location>
        <position position="495"/>
    </location>
</feature>
<feature type="modified residue" description="4-hydroxyproline" evidence="3">
    <location>
        <position position="504"/>
    </location>
</feature>
<feature type="modified residue" description="4-hydroxyproline" evidence="3">
    <location>
        <position position="517"/>
    </location>
</feature>
<feature type="modified residue" description="4-hydroxyproline" evidence="3">
    <location>
        <position position="523"/>
    </location>
</feature>
<feature type="modified residue" description="4-hydroxyproline" evidence="3">
    <location>
        <position position="532"/>
    </location>
</feature>
<feature type="modified residue" description="5-hydroxylysine" evidence="3">
    <location>
        <position position="544"/>
    </location>
</feature>
<feature type="modified residue" description="4-hydroxyproline" evidence="3">
    <location>
        <position position="550"/>
    </location>
</feature>
<feature type="modified residue" description="4-hydroxyproline" evidence="3">
    <location>
        <position position="565"/>
    </location>
</feature>
<feature type="modified residue" description="4-hydroxyproline" evidence="3">
    <location>
        <position position="571"/>
    </location>
</feature>
<feature type="modified residue" description="Phosphoserine" evidence="2">
    <location>
        <position position="580"/>
    </location>
</feature>
<feature type="modified residue" description="4-hydroxyproline" evidence="3">
    <location>
        <position position="592"/>
    </location>
</feature>
<feature type="modified residue" description="4-hydroxyproline" evidence="3">
    <location>
        <position position="598"/>
    </location>
</feature>
<feature type="modified residue" description="4-hydroxyproline" evidence="3">
    <location>
        <position position="601"/>
    </location>
</feature>
<feature type="modified residue" description="4-hydroxyproline" evidence="3">
    <location>
        <position position="610"/>
    </location>
</feature>
<feature type="modified residue" description="4-hydroxyproline" evidence="3">
    <location>
        <position position="616"/>
    </location>
</feature>
<feature type="modified residue" description="4-hydroxyproline" evidence="3">
    <location>
        <position position="634"/>
    </location>
</feature>
<feature type="modified residue" description="4-hydroxyproline" evidence="3">
    <location>
        <position position="643"/>
    </location>
</feature>
<feature type="modified residue" description="4-hydroxyproline" evidence="3">
    <location>
        <position position="652"/>
    </location>
</feature>
<feature type="modified residue" description="5-hydroxylysine" evidence="3">
    <location>
        <position position="655"/>
    </location>
</feature>
<feature type="modified residue" description="4-hydroxyproline" evidence="3">
    <location>
        <position position="664"/>
    </location>
</feature>
<feature type="modified residue" description="4-hydroxyproline" evidence="3">
    <location>
        <position position="670"/>
    </location>
</feature>
<feature type="modified residue" description="3-hydroxyproline" evidence="4">
    <location>
        <position position="678"/>
    </location>
</feature>
<feature type="modified residue" description="4-hydroxyproline" evidence="4">
    <location>
        <position position="679"/>
    </location>
</feature>
<feature type="modified residue" description="4-hydroxyproline" evidence="4">
    <location>
        <position position="688"/>
    </location>
</feature>
<feature type="modified residue" description="4-hydroxyproline" evidence="4">
    <location>
        <position position="691"/>
    </location>
</feature>
<feature type="modified residue" description="4-hydroxyproline" evidence="3">
    <location>
        <position position="718"/>
    </location>
</feature>
<feature type="modified residue" description="4-hydroxyproline" evidence="3">
    <location>
        <position position="726"/>
    </location>
</feature>
<feature type="modified residue" description="4-hydroxyproline" evidence="3">
    <location>
        <position position="735"/>
    </location>
</feature>
<feature type="modified residue" description="4-hydroxyproline" evidence="3">
    <location>
        <position position="753"/>
    </location>
</feature>
<feature type="modified residue" description="4-hydroxyproline" evidence="3">
    <location>
        <position position="762"/>
    </location>
</feature>
<feature type="modified residue" description="4-hydroxyproline" evidence="3">
    <location>
        <position position="765"/>
    </location>
</feature>
<feature type="modified residue" description="4-hydroxyproline" evidence="3">
    <location>
        <position position="771"/>
    </location>
</feature>
<feature type="modified residue" description="4-hydroxyproline" evidence="3">
    <location>
        <position position="786"/>
    </location>
</feature>
<feature type="modified residue" description="4-hydroxyproline" evidence="3">
    <location>
        <position position="792"/>
    </location>
</feature>
<feature type="modified residue" description="4-hydroxyproline" evidence="3">
    <location>
        <position position="798"/>
    </location>
</feature>
<feature type="modified residue" description="4-hydroxyproline" evidence="3">
    <location>
        <position position="806"/>
    </location>
</feature>
<feature type="modified residue" description="4-hydroxyproline" evidence="3">
    <location>
        <position position="812"/>
    </location>
</feature>
<feature type="modified residue" description="5-hydroxylysine" evidence="3">
    <location>
        <position position="821"/>
    </location>
</feature>
<feature type="modified residue" description="4-hydroxyproline" evidence="3">
    <location>
        <position position="832"/>
    </location>
</feature>
<feature type="modified residue" description="4-hydroxyproline" evidence="3">
    <location>
        <position position="835"/>
    </location>
</feature>
<feature type="modified residue" description="4-hydroxyproline" evidence="3">
    <location>
        <position position="838"/>
    </location>
</feature>
<feature type="modified residue" description="5-hydroxylysine" evidence="3">
    <location>
        <position position="882"/>
    </location>
</feature>
<feature type="modified residue" description="5-hydroxylysine; alternate" evidence="3">
    <location>
        <position position="894"/>
    </location>
</feature>
<feature type="modified residue" description="4-hydroxyproline" evidence="3">
    <location>
        <position position="907"/>
    </location>
</feature>
<feature type="modified residue" description="4-hydroxyproline" evidence="3">
    <location>
        <position position="910"/>
    </location>
</feature>
<feature type="modified residue" description="4-hydroxyproline" evidence="3">
    <location>
        <position position="928"/>
    </location>
</feature>
<feature type="modified residue" description="4-hydroxyproline" evidence="4">
    <location>
        <position position="943"/>
    </location>
</feature>
<feature type="modified residue" description="3-hydroxyproline" evidence="4">
    <location>
        <position position="948"/>
    </location>
</feature>
<feature type="modified residue" description="4-hydroxyproline" evidence="4">
    <location>
        <position position="949"/>
    </location>
</feature>
<feature type="modified residue" description="3-hydroxyproline" evidence="4">
    <location>
        <position position="963"/>
    </location>
</feature>
<feature type="modified residue" description="4-hydroxyproline" evidence="4">
    <location>
        <position position="964"/>
    </location>
</feature>
<feature type="modified residue" description="3-hydroxyproline" evidence="4">
    <location>
        <position position="966"/>
    </location>
</feature>
<feature type="modified residue" description="4-hydroxyproline" evidence="4">
    <location>
        <position position="967"/>
    </location>
</feature>
<feature type="modified residue" description="3-hydroxyproline" evidence="4">
    <location>
        <position position="969"/>
    </location>
</feature>
<feature type="modified residue" description="4-hydroxyproline" evidence="4">
    <location>
        <position position="970"/>
    </location>
</feature>
<feature type="modified residue" description="4-hydroxyproline" evidence="4">
    <location>
        <position position="973"/>
    </location>
</feature>
<feature type="modified residue" description="4-hydroxyproline" evidence="4">
    <location>
        <position position="976"/>
    </location>
</feature>
<feature type="glycosylation site" description="O-linked (Gal...) hydroxylysine; alternate" evidence="1">
    <location>
        <position position="94"/>
    </location>
</feature>
<feature type="glycosylation site" description="O-linked (Gal...) hydroxylysine; alternate" evidence="3">
    <location>
        <position position="894"/>
    </location>
</feature>
<feature type="unsure residue" description="I or L" evidence="6">
    <location>
        <position position="5"/>
    </location>
</feature>
<feature type="unsure residue" description="L or I" evidence="6">
    <location>
        <position position="19"/>
    </location>
</feature>
<feature type="unsure residue" description="L or I" evidence="6">
    <location>
        <position position="84"/>
    </location>
</feature>
<feature type="unsure residue" description="L or I" evidence="6">
    <location>
        <position position="90"/>
    </location>
</feature>
<feature type="unsure residue" description="L or I" evidence="6">
    <location>
        <position position="102"/>
    </location>
</feature>
<feature type="unsure residue" description="I or L" evidence="6">
    <location>
        <position position="224"/>
    </location>
</feature>
<feature type="unsure residue" description="I or L" evidence="6">
    <location>
        <position position="271"/>
    </location>
</feature>
<feature type="unsure residue" description="L or I" evidence="6">
    <location>
        <position position="295"/>
    </location>
</feature>
<feature type="unsure residue" description="L or I" evidence="6">
    <location>
        <position position="348"/>
    </location>
</feature>
<feature type="unsure residue" description="L or I" evidence="6">
    <location>
        <position position="354"/>
    </location>
</feature>
<feature type="unsure residue" description="L or I" evidence="6">
    <location>
        <position position="458"/>
    </location>
</feature>
<feature type="unsure residue" description="L or I" evidence="6">
    <location>
        <position position="519"/>
    </location>
</feature>
<feature type="unsure residue" description="L or I" evidence="6">
    <location>
        <position position="531"/>
    </location>
</feature>
<feature type="unsure residue" description="L or I" evidence="6">
    <location>
        <position position="558"/>
    </location>
</feature>
<feature type="unsure residue" description="I or L" evidence="6">
    <location>
        <position position="562"/>
    </location>
</feature>
<feature type="unsure residue" description="I or L" evidence="6">
    <location>
        <position position="646"/>
    </location>
</feature>
<feature type="unsure residue" description="L or I" evidence="6">
    <location>
        <position position="649"/>
    </location>
</feature>
<feature type="unsure residue" description="I or L" evidence="6">
    <location>
        <position position="743"/>
    </location>
</feature>
<feature type="unsure residue" description="L or I" evidence="6">
    <location>
        <position position="752"/>
    </location>
</feature>
<feature type="unsure residue" description="L or I" evidence="6">
    <location>
        <position position="764"/>
    </location>
</feature>
<feature type="unsure residue" description="L or I" evidence="6">
    <location>
        <position position="794"/>
    </location>
</feature>
<feature type="unsure residue" description="I or L" evidence="6">
    <location>
        <position position="893"/>
    </location>
</feature>
<feature type="unsure residue" description="L or I" evidence="6">
    <location>
        <position position="900"/>
    </location>
</feature>
<feature type="unsure residue" description="L or I" evidence="6">
    <location>
        <position position="939"/>
    </location>
</feature>
<feature type="unsure residue" description="L or I" evidence="6">
    <location>
        <position position="942"/>
    </location>
</feature>
<feature type="unsure residue" description="I or L" evidence="6">
    <location>
        <position position="946"/>
    </location>
</feature>
<feature type="non-consecutive residues" evidence="7">
    <location>
        <begin position="42"/>
        <end position="43"/>
    </location>
</feature>
<feature type="non-consecutive residues" evidence="7">
    <location>
        <begin position="115"/>
        <end position="116"/>
    </location>
</feature>
<feature type="non-consecutive residues" evidence="7">
    <location>
        <begin position="125"/>
        <end position="126"/>
    </location>
</feature>
<feature type="non-consecutive residues" evidence="7">
    <location>
        <begin position="261"/>
        <end position="262"/>
    </location>
</feature>
<feature type="non-consecutive residues" evidence="7">
    <location>
        <begin position="297"/>
        <end position="298"/>
    </location>
</feature>
<feature type="non-consecutive residues" evidence="7">
    <location>
        <begin position="452"/>
        <end position="453"/>
    </location>
</feature>
<feature type="non-consecutive residues" evidence="7">
    <location>
        <begin position="512"/>
        <end position="513"/>
    </location>
</feature>
<feature type="non-consecutive residues" evidence="7">
    <location>
        <begin position="709"/>
        <end position="710"/>
    </location>
</feature>
<feature type="non-consecutive residues" evidence="7">
    <location>
        <begin position="720"/>
        <end position="721"/>
    </location>
</feature>
<feature type="non-consecutive residues" evidence="7">
    <location>
        <begin position="805"/>
        <end position="806"/>
    </location>
</feature>
<feature type="non-consecutive residues" evidence="7">
    <location>
        <begin position="829"/>
        <end position="830"/>
    </location>
</feature>
<feature type="non-consecutive residues" evidence="7">
    <location>
        <begin position="858"/>
        <end position="859"/>
    </location>
</feature>
<feature type="non-consecutive residues" evidence="7">
    <location>
        <begin position="894"/>
        <end position="895"/>
    </location>
</feature>
<feature type="non-terminal residue" evidence="7">
    <location>
        <position position="1"/>
    </location>
</feature>
<feature type="non-terminal residue" evidence="7">
    <location>
        <position position="976"/>
    </location>
</feature>
<organism evidence="7">
    <name type="scientific">Acratocnus ye</name>
    <name type="common">Hispaniolan ground sloth</name>
    <dbReference type="NCBI Taxonomy" id="2546656"/>
    <lineage>
        <taxon>Eukaryota</taxon>
        <taxon>Metazoa</taxon>
        <taxon>Chordata</taxon>
        <taxon>Craniata</taxon>
        <taxon>Vertebrata</taxon>
        <taxon>Euteleostomi</taxon>
        <taxon>Mammalia</taxon>
        <taxon>Eutheria</taxon>
        <taxon>Xenarthra</taxon>
        <taxon>Pilosa</taxon>
        <taxon>Folivora</taxon>
        <taxon>Megalonychidae</taxon>
        <taxon>Acratocnus</taxon>
    </lineage>
</organism>
<sequence>SAGGISVPGPMGPSGPRGLPGPPGAPGPQGFQGPPGEPGEPGSGPMGPRGPPGPPGKNGDDGEAGKPGRPGERGPPGPQGARGLPGTAGLPGMKGHRGFSGLDGAKGDAGPAGPKGAPGQMGPRGPGERGRPGASGPAGARGNDGATGAAGPPGPTGPAGPPGFPGAVGAKGEAGPQGARGSEGPQGVRGEPGPPGPAGAAGPAGNPGADGQPGAKGANGAPGIAGAPGFPGARGPSGPQGPSGPPGPKGNSGEPGAPGSKAKGEPGPTGIQGPPGPAGEEGKRGARGEPGPTGLPGPGERGGPGSRGFPGADGVAGPKGPAGERGSPGPAGPKGSPGEAGRPGEAGLPGAKGLTGSPGSPGPDGKTGPPGPAGQDGRPGPPGPPGARGQAGVMGFPGPKGAAGEPGKAGERGVPGPPGAVGPAGKDGEAGAQGPPGPAGPAGERGEQGPAGPGFQGLPGPAGPPGEAGKPGEQGVPGDLGAPGPSGARGERGFPGERGVQGPPGPAGPRGSSQGAPGLQGMPGERGAAGLPGPKGDRGDAGPKGADGAPGKDGVRGLTGPIGPPGPAGAPGDKGESGPSGPAGPTGARGAPGDRGEPGPPGPAGFAGPPGADGQPGAKGEPGDAGAKGDAGPPGPAGPTGAPGPIGNLGAPGPKGARGSAGPPGATGFPGAAGRVGPPGPSGNAGPPGPPGPVGKEGGKGPRGETGPAGEVGPPGPPGPGEKGSPGADGPAGAPGTPGPQGISGQRGVVGLPGQRGERGFPGLPGPSGEPGKQGPSGSSGERGPPGPMGPPGLAGPPGESGREGPGAEGSPGRDGSPGPKGDRGETGPGPPGAPGAPGAPGPVGPAGKSGDRGETGPGPAGPAGPAGARGPAGPQGPRGDKGETGEQGDRGIKRGFSGLQGPAGPPGSPGEQGPSGASGPAGPRGPPGSAGSPGKDGLNGLPGPIGPPGPRGRTGDAGPVGPPGPPGPPGPPGPP</sequence>
<protein>
    <recommendedName>
        <fullName evidence="7">Collagen alpha-1(I) chain</fullName>
    </recommendedName>
    <alternativeName>
        <fullName evidence="1">Alpha-1 type I collagen</fullName>
    </alternativeName>
</protein>
<accession>C0HLH1</accession>
<keyword id="KW-0903">Direct protein sequencing</keyword>
<keyword id="KW-0952">Extinct organism protein</keyword>
<keyword id="KW-0272">Extracellular matrix</keyword>
<keyword id="KW-0325">Glycoprotein</keyword>
<keyword id="KW-0379">Hydroxylation</keyword>
<keyword id="KW-0597">Phosphoprotein</keyword>
<keyword id="KW-0964">Secreted</keyword>
<reference evidence="8" key="1">
    <citation type="journal article" date="2019" name="Nat. Ecol. Evol.">
        <title>Palaeoproteomics resolves sloth relationships.</title>
        <authorList>
            <person name="Presslee S."/>
            <person name="Slater G.J."/>
            <person name="Pujos F."/>
            <person name="Forasiepi A.M."/>
            <person name="Fischer R."/>
            <person name="Molloy K."/>
            <person name="Mackie M."/>
            <person name="Olsen J.V."/>
            <person name="Kramarz A."/>
            <person name="Taglioretti M."/>
            <person name="Scaglia F."/>
            <person name="Lezcano M."/>
            <person name="Lanata J.L."/>
            <person name="Southon J."/>
            <person name="Feranec R."/>
            <person name="Bloch J."/>
            <person name="Hajduk A."/>
            <person name="Martin F.M."/>
            <person name="Salas Gismondi R."/>
            <person name="Reguero M."/>
            <person name="de Muizon C."/>
            <person name="Greenwood A."/>
            <person name="Chait B.T."/>
            <person name="Penkman K."/>
            <person name="Collins M."/>
            <person name="MacPhee R.D.E."/>
        </authorList>
    </citation>
    <scope>PROTEIN SEQUENCE</scope>
    <scope>TISSUE SPECIFICITY</scope>
    <scope>IDENTIFICATION BY MASS SPECTROMETRY</scope>
    <source>
        <tissue evidence="7">Bone</tissue>
    </source>
</reference>
<name>CO1A1_ACRYE</name>
<dbReference type="GO" id="GO:0031012">
    <property type="term" value="C:extracellular matrix"/>
    <property type="evidence" value="ECO:0007669"/>
    <property type="project" value="TreeGrafter"/>
</dbReference>
<dbReference type="GO" id="GO:0005615">
    <property type="term" value="C:extracellular space"/>
    <property type="evidence" value="ECO:0007669"/>
    <property type="project" value="TreeGrafter"/>
</dbReference>
<dbReference type="GO" id="GO:0030020">
    <property type="term" value="F:extracellular matrix structural constituent conferring tensile strength"/>
    <property type="evidence" value="ECO:0007669"/>
    <property type="project" value="TreeGrafter"/>
</dbReference>
<dbReference type="GO" id="GO:0030198">
    <property type="term" value="P:extracellular matrix organization"/>
    <property type="evidence" value="ECO:0007669"/>
    <property type="project" value="TreeGrafter"/>
</dbReference>
<dbReference type="InterPro" id="IPR008160">
    <property type="entry name" value="Collagen"/>
</dbReference>
<dbReference type="InterPro" id="IPR050149">
    <property type="entry name" value="Collagen_superfamily"/>
</dbReference>
<dbReference type="PANTHER" id="PTHR24023">
    <property type="entry name" value="COLLAGEN ALPHA"/>
    <property type="match status" value="1"/>
</dbReference>
<dbReference type="PANTHER" id="PTHR24023:SF1082">
    <property type="entry name" value="COLLAGEN TRIPLE HELIX REPEAT"/>
    <property type="match status" value="1"/>
</dbReference>
<dbReference type="Pfam" id="PF01391">
    <property type="entry name" value="Collagen"/>
    <property type="match status" value="15"/>
</dbReference>
<proteinExistence type="evidence at protein level"/>
<comment type="function">
    <text evidence="8">Type I collagen is a member of group I collagen (fibrillar forming collagen).</text>
</comment>
<comment type="subunit">
    <text evidence="8">Trimers of one alpha 2(I) and two alpha 1(I) chains.</text>
</comment>
<comment type="subcellular location">
    <subcellularLocation>
        <location>Secreted</location>
    </subcellularLocation>
    <subcellularLocation>
        <location>Secreted</location>
        <location>Extracellular space</location>
    </subcellularLocation>
    <subcellularLocation>
        <location evidence="8">Secreted</location>
        <location evidence="8">Extracellular space</location>
        <location evidence="8">Extracellular matrix</location>
    </subcellularLocation>
</comment>
<comment type="tissue specificity">
    <text evidence="6">Expressed in bones.</text>
</comment>
<comment type="PTM">
    <text evidence="1">Contains mostly 4-hydroxyproline. Proline residues at the third position of the tripeptide repeating unit (G-X-Y) are hydroxylated in some or all of the chains.</text>
</comment>
<comment type="PTM">
    <text evidence="4">Contains 3-hydroxyproline at a few sites. This modification occurs on the first proline residue in the sequence motif Gly-Pro-Hyp, where Hyp is 4-hydroxyproline.</text>
</comment>
<comment type="PTM">
    <text evidence="1">Lysine residues at the third position of the tripeptide repeating unit (G-X-Y) are 5-hydroxylated in some or all of the chains.</text>
</comment>
<comment type="PTM">
    <text evidence="1">O-glycosylated on hydroxylated lysine residues. The O-linked glycan consists of a Glc-Gal disaccharide.</text>
</comment>
<comment type="miscellaneous">
    <text evidence="6">These protein fragments were extracted from an ancient mandible bone collected in Haiti.</text>
</comment>
<comment type="similarity">
    <text evidence="8">Belongs to the fibrillar collagen family.</text>
</comment>